<accession>P81230</accession>
<gene>
    <name type="ordered locus">MJ1249.1</name>
</gene>
<keyword id="KW-1003">Cell membrane</keyword>
<keyword id="KW-0472">Membrane</keyword>
<keyword id="KW-1185">Reference proteome</keyword>
<keyword id="KW-0812">Transmembrane</keyword>
<keyword id="KW-1133">Transmembrane helix</keyword>
<protein>
    <recommendedName>
        <fullName>Uncharacterized protein MJ1249.1</fullName>
    </recommendedName>
</protein>
<comment type="subcellular location">
    <subcellularLocation>
        <location evidence="2">Cell membrane</location>
        <topology evidence="2">Multi-pass membrane protein</topology>
    </subcellularLocation>
</comment>
<comment type="similarity">
    <text evidence="2">To M.jannaschii MJ0795.1 and MJ0785.1.</text>
</comment>
<evidence type="ECO:0000255" key="1"/>
<evidence type="ECO:0000305" key="2"/>
<feature type="chain" id="PRO_0000107240" description="Uncharacterized protein MJ1249.1">
    <location>
        <begin position="1"/>
        <end position="166"/>
    </location>
</feature>
<feature type="transmembrane region" description="Helical" evidence="1">
    <location>
        <begin position="7"/>
        <end position="27"/>
    </location>
</feature>
<feature type="transmembrane region" description="Helical" evidence="1">
    <location>
        <begin position="30"/>
        <end position="50"/>
    </location>
</feature>
<feature type="transmembrane region" description="Helical" evidence="1">
    <location>
        <begin position="69"/>
        <end position="89"/>
    </location>
</feature>
<feature type="transmembrane region" description="Helical" evidence="1">
    <location>
        <begin position="92"/>
        <end position="112"/>
    </location>
</feature>
<dbReference type="EMBL" id="L77117">
    <property type="protein sequence ID" value="AAB99259.1"/>
    <property type="molecule type" value="Genomic_DNA"/>
</dbReference>
<dbReference type="SMR" id="P81230"/>
<dbReference type="STRING" id="243232.MJ_1249.1"/>
<dbReference type="PaxDb" id="243232-MJ_1249.1"/>
<dbReference type="EnsemblBacteria" id="AAB99259">
    <property type="protein sequence ID" value="AAB99259"/>
    <property type="gene ID" value="MJ_1249.1"/>
</dbReference>
<dbReference type="KEGG" id="mja:MJ_1249.1"/>
<dbReference type="eggNOG" id="arCOG09674">
    <property type="taxonomic scope" value="Archaea"/>
</dbReference>
<dbReference type="HOGENOM" id="CLU_1451435_0_0_2"/>
<dbReference type="InParanoid" id="P81230"/>
<dbReference type="BRENDA" id="1.4.1.24">
    <property type="organism ID" value="3260"/>
</dbReference>
<dbReference type="Proteomes" id="UP000000805">
    <property type="component" value="Chromosome"/>
</dbReference>
<dbReference type="GO" id="GO:0005886">
    <property type="term" value="C:plasma membrane"/>
    <property type="evidence" value="ECO:0007669"/>
    <property type="project" value="UniProtKB-SubCell"/>
</dbReference>
<proteinExistence type="predicted"/>
<organism>
    <name type="scientific">Methanocaldococcus jannaschii (strain ATCC 43067 / DSM 2661 / JAL-1 / JCM 10045 / NBRC 100440)</name>
    <name type="common">Methanococcus jannaschii</name>
    <dbReference type="NCBI Taxonomy" id="243232"/>
    <lineage>
        <taxon>Archaea</taxon>
        <taxon>Methanobacteriati</taxon>
        <taxon>Methanobacteriota</taxon>
        <taxon>Methanomada group</taxon>
        <taxon>Methanococci</taxon>
        <taxon>Methanococcales</taxon>
        <taxon>Methanocaldococcaceae</taxon>
        <taxon>Methanocaldococcus</taxon>
    </lineage>
</organism>
<sequence>MRGINPVLFKISFLLIILVSLILSLFYYNFLFAFLLSFILFGITWAYCYIKIESTDKGKLLYEIKRPGIETLRFLFILMIISVFIKSLLHSNSFFPYISFLLSNLILGLVLFDDYILGNPTIKFYEKGVVFDRVAFYNWEELDIKEDEGYLKIKIKYYPKEIMYKK</sequence>
<name>YC4B_METJA</name>
<reference key="1">
    <citation type="journal article" date="1996" name="Science">
        <title>Complete genome sequence of the methanogenic archaeon, Methanococcus jannaschii.</title>
        <authorList>
            <person name="Bult C.J."/>
            <person name="White O."/>
            <person name="Olsen G.J."/>
            <person name="Zhou L."/>
            <person name="Fleischmann R.D."/>
            <person name="Sutton G.G."/>
            <person name="Blake J.A."/>
            <person name="FitzGerald L.M."/>
            <person name="Clayton R.A."/>
            <person name="Gocayne J.D."/>
            <person name="Kerlavage A.R."/>
            <person name="Dougherty B.A."/>
            <person name="Tomb J.-F."/>
            <person name="Adams M.D."/>
            <person name="Reich C.I."/>
            <person name="Overbeek R."/>
            <person name="Kirkness E.F."/>
            <person name="Weinstock K.G."/>
            <person name="Merrick J.M."/>
            <person name="Glodek A."/>
            <person name="Scott J.L."/>
            <person name="Geoghagen N.S.M."/>
            <person name="Weidman J.F."/>
            <person name="Fuhrmann J.L."/>
            <person name="Nguyen D."/>
            <person name="Utterback T.R."/>
            <person name="Kelley J.M."/>
            <person name="Peterson J.D."/>
            <person name="Sadow P.W."/>
            <person name="Hanna M.C."/>
            <person name="Cotton M.D."/>
            <person name="Roberts K.M."/>
            <person name="Hurst M.A."/>
            <person name="Kaine B.P."/>
            <person name="Borodovsky M."/>
            <person name="Klenk H.-P."/>
            <person name="Fraser C.M."/>
            <person name="Smith H.O."/>
            <person name="Woese C.R."/>
            <person name="Venter J.C."/>
        </authorList>
    </citation>
    <scope>NUCLEOTIDE SEQUENCE [LARGE SCALE GENOMIC DNA]</scope>
    <source>
        <strain>ATCC 43067 / DSM 2661 / JAL-1 / JCM 10045 / NBRC 100440</strain>
    </source>
</reference>